<comment type="function">
    <text evidence="1">This protein is involved in the repair of mismatches in DNA. It is required for dam-dependent methyl-directed DNA mismatch repair. May act as a 'molecular matchmaker', a protein that promotes the formation of a stable complex between two or more DNA-binding proteins in an ATP-dependent manner without itself being part of a final effector complex.</text>
</comment>
<comment type="similarity">
    <text evidence="1">Belongs to the DNA mismatch repair MutL/HexB family.</text>
</comment>
<comment type="sequence caution" evidence="2">
    <conflict type="erroneous initiation">
        <sequence resource="EMBL-CDS" id="AAK06306"/>
    </conflict>
</comment>
<dbReference type="EMBL" id="AE005176">
    <property type="protein sequence ID" value="AAK06306.1"/>
    <property type="status" value="ALT_INIT"/>
    <property type="molecule type" value="Genomic_DNA"/>
</dbReference>
<dbReference type="PIR" id="H86900">
    <property type="entry name" value="H86900"/>
</dbReference>
<dbReference type="RefSeq" id="NP_268365.1">
    <property type="nucleotide sequence ID" value="NC_002662.1"/>
</dbReference>
<dbReference type="RefSeq" id="WP_031297070.1">
    <property type="nucleotide sequence ID" value="NC_002662.1"/>
</dbReference>
<dbReference type="SMR" id="Q9CDL1"/>
<dbReference type="PaxDb" id="272623-L0276"/>
<dbReference type="EnsemblBacteria" id="AAK06306">
    <property type="protein sequence ID" value="AAK06306"/>
    <property type="gene ID" value="L0276"/>
</dbReference>
<dbReference type="KEGG" id="lla:L0276"/>
<dbReference type="PATRIC" id="fig|272623.7.peg.2372"/>
<dbReference type="eggNOG" id="COG0323">
    <property type="taxonomic scope" value="Bacteria"/>
</dbReference>
<dbReference type="HOGENOM" id="CLU_004131_4_2_9"/>
<dbReference type="OrthoDB" id="9763467at2"/>
<dbReference type="Proteomes" id="UP000002196">
    <property type="component" value="Chromosome"/>
</dbReference>
<dbReference type="GO" id="GO:0032300">
    <property type="term" value="C:mismatch repair complex"/>
    <property type="evidence" value="ECO:0007669"/>
    <property type="project" value="InterPro"/>
</dbReference>
<dbReference type="GO" id="GO:0005524">
    <property type="term" value="F:ATP binding"/>
    <property type="evidence" value="ECO:0007669"/>
    <property type="project" value="InterPro"/>
</dbReference>
<dbReference type="GO" id="GO:0016887">
    <property type="term" value="F:ATP hydrolysis activity"/>
    <property type="evidence" value="ECO:0007669"/>
    <property type="project" value="InterPro"/>
</dbReference>
<dbReference type="GO" id="GO:0140664">
    <property type="term" value="F:ATP-dependent DNA damage sensor activity"/>
    <property type="evidence" value="ECO:0007669"/>
    <property type="project" value="InterPro"/>
</dbReference>
<dbReference type="GO" id="GO:0030983">
    <property type="term" value="F:mismatched DNA binding"/>
    <property type="evidence" value="ECO:0007669"/>
    <property type="project" value="InterPro"/>
</dbReference>
<dbReference type="GO" id="GO:0006298">
    <property type="term" value="P:mismatch repair"/>
    <property type="evidence" value="ECO:0007669"/>
    <property type="project" value="UniProtKB-UniRule"/>
</dbReference>
<dbReference type="CDD" id="cd16926">
    <property type="entry name" value="HATPase_MutL-MLH-PMS-like"/>
    <property type="match status" value="1"/>
</dbReference>
<dbReference type="CDD" id="cd00782">
    <property type="entry name" value="MutL_Trans"/>
    <property type="match status" value="1"/>
</dbReference>
<dbReference type="FunFam" id="3.30.565.10:FF:000003">
    <property type="entry name" value="DNA mismatch repair endonuclease MutL"/>
    <property type="match status" value="1"/>
</dbReference>
<dbReference type="Gene3D" id="3.30.230.10">
    <property type="match status" value="1"/>
</dbReference>
<dbReference type="Gene3D" id="3.30.565.10">
    <property type="entry name" value="Histidine kinase-like ATPase, C-terminal domain"/>
    <property type="match status" value="1"/>
</dbReference>
<dbReference type="Gene3D" id="3.30.1540.20">
    <property type="entry name" value="MutL, C-terminal domain, dimerisation subdomain"/>
    <property type="match status" value="1"/>
</dbReference>
<dbReference type="Gene3D" id="3.30.1370.100">
    <property type="entry name" value="MutL, C-terminal domain, regulatory subdomain"/>
    <property type="match status" value="1"/>
</dbReference>
<dbReference type="HAMAP" id="MF_00149">
    <property type="entry name" value="DNA_mis_repair"/>
    <property type="match status" value="1"/>
</dbReference>
<dbReference type="InterPro" id="IPR014762">
    <property type="entry name" value="DNA_mismatch_repair_CS"/>
</dbReference>
<dbReference type="InterPro" id="IPR020667">
    <property type="entry name" value="DNA_mismatch_repair_MutL"/>
</dbReference>
<dbReference type="InterPro" id="IPR013507">
    <property type="entry name" value="DNA_mismatch_S5_2-like"/>
</dbReference>
<dbReference type="InterPro" id="IPR036890">
    <property type="entry name" value="HATPase_C_sf"/>
</dbReference>
<dbReference type="InterPro" id="IPR002099">
    <property type="entry name" value="MutL/Mlh/PMS"/>
</dbReference>
<dbReference type="InterPro" id="IPR038973">
    <property type="entry name" value="MutL/Mlh/Pms-like"/>
</dbReference>
<dbReference type="InterPro" id="IPR014790">
    <property type="entry name" value="MutL_C"/>
</dbReference>
<dbReference type="InterPro" id="IPR042120">
    <property type="entry name" value="MutL_C_dimsub"/>
</dbReference>
<dbReference type="InterPro" id="IPR042121">
    <property type="entry name" value="MutL_C_regsub"/>
</dbReference>
<dbReference type="InterPro" id="IPR037198">
    <property type="entry name" value="MutL_C_sf"/>
</dbReference>
<dbReference type="InterPro" id="IPR020568">
    <property type="entry name" value="Ribosomal_Su5_D2-typ_SF"/>
</dbReference>
<dbReference type="InterPro" id="IPR014721">
    <property type="entry name" value="Ribsml_uS5_D2-typ_fold_subgr"/>
</dbReference>
<dbReference type="NCBIfam" id="TIGR00585">
    <property type="entry name" value="mutl"/>
    <property type="match status" value="1"/>
</dbReference>
<dbReference type="NCBIfam" id="NF000950">
    <property type="entry name" value="PRK00095.1-3"/>
    <property type="match status" value="1"/>
</dbReference>
<dbReference type="PANTHER" id="PTHR10073">
    <property type="entry name" value="DNA MISMATCH REPAIR PROTEIN MLH, PMS, MUTL"/>
    <property type="match status" value="1"/>
</dbReference>
<dbReference type="PANTHER" id="PTHR10073:SF12">
    <property type="entry name" value="DNA MISMATCH REPAIR PROTEIN MLH1"/>
    <property type="match status" value="1"/>
</dbReference>
<dbReference type="Pfam" id="PF01119">
    <property type="entry name" value="DNA_mis_repair"/>
    <property type="match status" value="1"/>
</dbReference>
<dbReference type="Pfam" id="PF13589">
    <property type="entry name" value="HATPase_c_3"/>
    <property type="match status" value="1"/>
</dbReference>
<dbReference type="Pfam" id="PF08676">
    <property type="entry name" value="MutL_C"/>
    <property type="match status" value="1"/>
</dbReference>
<dbReference type="SMART" id="SM01340">
    <property type="entry name" value="DNA_mis_repair"/>
    <property type="match status" value="1"/>
</dbReference>
<dbReference type="SMART" id="SM00853">
    <property type="entry name" value="MutL_C"/>
    <property type="match status" value="1"/>
</dbReference>
<dbReference type="SUPFAM" id="SSF55874">
    <property type="entry name" value="ATPase domain of HSP90 chaperone/DNA topoisomerase II/histidine kinase"/>
    <property type="match status" value="1"/>
</dbReference>
<dbReference type="SUPFAM" id="SSF118116">
    <property type="entry name" value="DNA mismatch repair protein MutL"/>
    <property type="match status" value="1"/>
</dbReference>
<dbReference type="SUPFAM" id="SSF54211">
    <property type="entry name" value="Ribosomal protein S5 domain 2-like"/>
    <property type="match status" value="1"/>
</dbReference>
<dbReference type="PROSITE" id="PS00058">
    <property type="entry name" value="DNA_MISMATCH_REPAIR_1"/>
    <property type="match status" value="1"/>
</dbReference>
<accession>Q9CDL1</accession>
<feature type="chain" id="PRO_0000177948" description="DNA mismatch repair protein MutL">
    <location>
        <begin position="1"/>
        <end position="656"/>
    </location>
</feature>
<evidence type="ECO:0000255" key="1">
    <source>
        <dbReference type="HAMAP-Rule" id="MF_00149"/>
    </source>
</evidence>
<evidence type="ECO:0000305" key="2"/>
<protein>
    <recommendedName>
        <fullName evidence="1">DNA mismatch repair protein MutL</fullName>
    </recommendedName>
</protein>
<organism>
    <name type="scientific">Lactococcus lactis subsp. lactis (strain IL1403)</name>
    <name type="common">Streptococcus lactis</name>
    <dbReference type="NCBI Taxonomy" id="272623"/>
    <lineage>
        <taxon>Bacteria</taxon>
        <taxon>Bacillati</taxon>
        <taxon>Bacillota</taxon>
        <taxon>Bacilli</taxon>
        <taxon>Lactobacillales</taxon>
        <taxon>Streptococcaceae</taxon>
        <taxon>Lactococcus</taxon>
    </lineage>
</organism>
<reference key="1">
    <citation type="journal article" date="2001" name="Genome Res.">
        <title>The complete genome sequence of the lactic acid bacterium Lactococcus lactis ssp. lactis IL1403.</title>
        <authorList>
            <person name="Bolotin A."/>
            <person name="Wincker P."/>
            <person name="Mauger S."/>
            <person name="Jaillon O."/>
            <person name="Malarme K."/>
            <person name="Weissenbach J."/>
            <person name="Ehrlich S.D."/>
            <person name="Sorokin A."/>
        </authorList>
    </citation>
    <scope>NUCLEOTIDE SEQUENCE [LARGE SCALE GENOMIC DNA]</scope>
    <source>
        <strain>IL1403</strain>
    </source>
</reference>
<keyword id="KW-0227">DNA damage</keyword>
<keyword id="KW-0234">DNA repair</keyword>
<keyword id="KW-1185">Reference proteome</keyword>
<gene>
    <name evidence="1" type="primary">mutL</name>
    <name type="synonym">hexB</name>
    <name type="ordered locus">LL2208</name>
    <name type="ORF">L0276</name>
</gene>
<sequence length="656" mass="73712">MGKIIELNEALANQIAAGEVVERPASVVKELVENSIDAGSSKIIINVEEAGLRLIEVIDNGLGLEKEDVALALRRHATSKIKDSADLFRIRTLGFRGEALPSIASVSQMTIETSTAEEESGTKLVAKGGNIETLEPLAKRVGTKISVANLFYNTPARLKYIKSLQAELSHITDIINRLSLAHPEISFTLVNEGKEFLKTAGNGDLRQVIAAIYGIGTAKKMRQIKGSDLDFELTGYVSLPELTRANRNYITILINGRFIKNFLLNRAILEGYGNRLMVGRFPFAILSIKIDPTLADVNVHPTKQEVRLSKERELMALISKAIDEALSEGVLIPEALENLQGRAKEKESLSVQTELPLQNNPLYYDNVRQDFYVREEATFKINKNQASNDSSEQTFDNFTENQLNTDAVSEKMTDRTVESTTEITDNSLENTVSNFEIDFDNEAKISQSSTFPQLEYLAQLHATYLLCQSKEGLYLVDQHAAQERIKYEYWKDKIGEVSMEQQILLAPYLFTLAKNDFIVLAEKKDLLHEAGVFLEEYGENQFILREHPIWLKETEIEKSINEMIDIILSSKEFSLKKYRHDLAAMVACKSSIKANHPLDAESARALLAELATCKNPYSCAHGRPTIVHFSGDDIQKMFRRIQETHRSKAASWKDFE</sequence>
<proteinExistence type="inferred from homology"/>
<name>MUTL_LACLA</name>